<name>NRDR_ACAM1</name>
<dbReference type="EMBL" id="CP000828">
    <property type="protein sequence ID" value="ABW29531.1"/>
    <property type="molecule type" value="Genomic_DNA"/>
</dbReference>
<dbReference type="RefSeq" id="WP_012164841.1">
    <property type="nucleotide sequence ID" value="NC_009925.1"/>
</dbReference>
<dbReference type="SMR" id="B0BZ87"/>
<dbReference type="STRING" id="329726.AM1_4556"/>
<dbReference type="KEGG" id="amr:AM1_4556"/>
<dbReference type="eggNOG" id="COG1327">
    <property type="taxonomic scope" value="Bacteria"/>
</dbReference>
<dbReference type="HOGENOM" id="CLU_108412_0_0_3"/>
<dbReference type="OrthoDB" id="9807461at2"/>
<dbReference type="Proteomes" id="UP000000268">
    <property type="component" value="Chromosome"/>
</dbReference>
<dbReference type="GO" id="GO:0005524">
    <property type="term" value="F:ATP binding"/>
    <property type="evidence" value="ECO:0007669"/>
    <property type="project" value="UniProtKB-KW"/>
</dbReference>
<dbReference type="GO" id="GO:0003677">
    <property type="term" value="F:DNA binding"/>
    <property type="evidence" value="ECO:0007669"/>
    <property type="project" value="UniProtKB-KW"/>
</dbReference>
<dbReference type="GO" id="GO:0008270">
    <property type="term" value="F:zinc ion binding"/>
    <property type="evidence" value="ECO:0007669"/>
    <property type="project" value="UniProtKB-UniRule"/>
</dbReference>
<dbReference type="GO" id="GO:0045892">
    <property type="term" value="P:negative regulation of DNA-templated transcription"/>
    <property type="evidence" value="ECO:0007669"/>
    <property type="project" value="UniProtKB-UniRule"/>
</dbReference>
<dbReference type="HAMAP" id="MF_00440">
    <property type="entry name" value="NrdR"/>
    <property type="match status" value="1"/>
</dbReference>
<dbReference type="InterPro" id="IPR005144">
    <property type="entry name" value="ATP-cone_dom"/>
</dbReference>
<dbReference type="InterPro" id="IPR055173">
    <property type="entry name" value="NrdR-like_N"/>
</dbReference>
<dbReference type="InterPro" id="IPR003796">
    <property type="entry name" value="RNR_NrdR-like"/>
</dbReference>
<dbReference type="NCBIfam" id="TIGR00244">
    <property type="entry name" value="transcriptional regulator NrdR"/>
    <property type="match status" value="1"/>
</dbReference>
<dbReference type="PANTHER" id="PTHR30455">
    <property type="entry name" value="TRANSCRIPTIONAL REPRESSOR NRDR"/>
    <property type="match status" value="1"/>
</dbReference>
<dbReference type="PANTHER" id="PTHR30455:SF2">
    <property type="entry name" value="TRANSCRIPTIONAL REPRESSOR NRDR"/>
    <property type="match status" value="1"/>
</dbReference>
<dbReference type="Pfam" id="PF03477">
    <property type="entry name" value="ATP-cone"/>
    <property type="match status" value="1"/>
</dbReference>
<dbReference type="Pfam" id="PF22811">
    <property type="entry name" value="Zn_ribbon_NrdR"/>
    <property type="match status" value="1"/>
</dbReference>
<dbReference type="PROSITE" id="PS51161">
    <property type="entry name" value="ATP_CONE"/>
    <property type="match status" value="1"/>
</dbReference>
<feature type="chain" id="PRO_1000080695" description="Transcriptional repressor NrdR">
    <location>
        <begin position="1"/>
        <end position="176"/>
    </location>
</feature>
<feature type="domain" description="ATP-cone" evidence="1">
    <location>
        <begin position="49"/>
        <end position="139"/>
    </location>
</feature>
<feature type="zinc finger region" evidence="1">
    <location>
        <begin position="3"/>
        <end position="34"/>
    </location>
</feature>
<feature type="region of interest" description="Disordered" evidence="2">
    <location>
        <begin position="151"/>
        <end position="176"/>
    </location>
</feature>
<feature type="compositionally biased region" description="Polar residues" evidence="2">
    <location>
        <begin position="167"/>
        <end position="176"/>
    </location>
</feature>
<protein>
    <recommendedName>
        <fullName evidence="1">Transcriptional repressor NrdR</fullName>
    </recommendedName>
</protein>
<keyword id="KW-0067">ATP-binding</keyword>
<keyword id="KW-0238">DNA-binding</keyword>
<keyword id="KW-0479">Metal-binding</keyword>
<keyword id="KW-0547">Nucleotide-binding</keyword>
<keyword id="KW-1185">Reference proteome</keyword>
<keyword id="KW-0678">Repressor</keyword>
<keyword id="KW-0804">Transcription</keyword>
<keyword id="KW-0805">Transcription regulation</keyword>
<keyword id="KW-0862">Zinc</keyword>
<keyword id="KW-0863">Zinc-finger</keyword>
<comment type="function">
    <text evidence="1">Negatively regulates transcription of bacterial ribonucleotide reductase nrd genes and operons by binding to NrdR-boxes.</text>
</comment>
<comment type="cofactor">
    <cofactor evidence="1">
        <name>Zn(2+)</name>
        <dbReference type="ChEBI" id="CHEBI:29105"/>
    </cofactor>
    <text evidence="1">Binds 1 zinc ion.</text>
</comment>
<comment type="similarity">
    <text evidence="1">Belongs to the NrdR family.</text>
</comment>
<accession>B0BZ87</accession>
<reference key="1">
    <citation type="journal article" date="2008" name="Proc. Natl. Acad. Sci. U.S.A.">
        <title>Niche adaptation and genome expansion in the chlorophyll d-producing cyanobacterium Acaryochloris marina.</title>
        <authorList>
            <person name="Swingley W.D."/>
            <person name="Chen M."/>
            <person name="Cheung P.C."/>
            <person name="Conrad A.L."/>
            <person name="Dejesa L.C."/>
            <person name="Hao J."/>
            <person name="Honchak B.M."/>
            <person name="Karbach L.E."/>
            <person name="Kurdoglu A."/>
            <person name="Lahiri S."/>
            <person name="Mastrian S.D."/>
            <person name="Miyashita H."/>
            <person name="Page L."/>
            <person name="Ramakrishna P."/>
            <person name="Satoh S."/>
            <person name="Sattley W.M."/>
            <person name="Shimada Y."/>
            <person name="Taylor H.L."/>
            <person name="Tomo T."/>
            <person name="Tsuchiya T."/>
            <person name="Wang Z.T."/>
            <person name="Raymond J."/>
            <person name="Mimuro M."/>
            <person name="Blankenship R.E."/>
            <person name="Touchman J.W."/>
        </authorList>
    </citation>
    <scope>NUCLEOTIDE SEQUENCE [LARGE SCALE GENOMIC DNA]</scope>
    <source>
        <strain>MBIC 11017</strain>
    </source>
</reference>
<proteinExistence type="inferred from homology"/>
<organism>
    <name type="scientific">Acaryochloris marina (strain MBIC 11017)</name>
    <dbReference type="NCBI Taxonomy" id="329726"/>
    <lineage>
        <taxon>Bacteria</taxon>
        <taxon>Bacillati</taxon>
        <taxon>Cyanobacteriota</taxon>
        <taxon>Cyanophyceae</taxon>
        <taxon>Acaryochloridales</taxon>
        <taxon>Acaryochloridaceae</taxon>
        <taxon>Acaryochloris</taxon>
    </lineage>
</organism>
<gene>
    <name evidence="1" type="primary">nrdR</name>
    <name type="ordered locus">AM1_4556</name>
</gene>
<sequence>MQCPFCQHTDSRVLESRSAEAGQSVRRRRECLQCNRRFTTYERIEFVPITVIKRNQDRELFDRSKLLKGVATACEKTGLTALQLESLVDDVEAELQQQAVREVTSTELGESVLTKLQSLSEVAYVRFASVYRQFRGIRDFVEALDQLKESGDGPLPSVLDEPYEDTAQPTIMISPQ</sequence>
<evidence type="ECO:0000255" key="1">
    <source>
        <dbReference type="HAMAP-Rule" id="MF_00440"/>
    </source>
</evidence>
<evidence type="ECO:0000256" key="2">
    <source>
        <dbReference type="SAM" id="MobiDB-lite"/>
    </source>
</evidence>